<feature type="chain" id="PRO_0000056538" description="Betaine aldehyde dehydrogenase">
    <location>
        <begin position="1"/>
        <end position="487"/>
    </location>
</feature>
<feature type="active site" description="Charge relay system" evidence="1">
    <location>
        <position position="161"/>
    </location>
</feature>
<feature type="active site" description="Proton acceptor" evidence="1">
    <location>
        <position position="249"/>
    </location>
</feature>
<feature type="active site" description="Nucleophile" evidence="1">
    <location>
        <position position="283"/>
    </location>
</feature>
<feature type="active site" description="Charge relay system" evidence="1">
    <location>
        <position position="461"/>
    </location>
</feature>
<feature type="binding site" evidence="1">
    <location>
        <position position="27"/>
    </location>
    <ligand>
        <name>K(+)</name>
        <dbReference type="ChEBI" id="CHEBI:29103"/>
        <label>1</label>
    </ligand>
</feature>
<feature type="binding site" evidence="1">
    <location>
        <position position="93"/>
    </location>
    <ligand>
        <name>K(+)</name>
        <dbReference type="ChEBI" id="CHEBI:29103"/>
        <label>1</label>
    </ligand>
</feature>
<feature type="binding site" evidence="1">
    <location>
        <begin position="149"/>
        <end position="151"/>
    </location>
    <ligand>
        <name>NAD(+)</name>
        <dbReference type="ChEBI" id="CHEBI:57540"/>
    </ligand>
</feature>
<feature type="binding site" evidence="1">
    <location>
        <begin position="175"/>
        <end position="178"/>
    </location>
    <ligand>
        <name>NAD(+)</name>
        <dbReference type="ChEBI" id="CHEBI:57540"/>
    </ligand>
</feature>
<feature type="binding site" evidence="1">
    <location>
        <begin position="228"/>
        <end position="231"/>
    </location>
    <ligand>
        <name>NAD(+)</name>
        <dbReference type="ChEBI" id="CHEBI:57540"/>
    </ligand>
</feature>
<feature type="binding site" evidence="1">
    <location>
        <position position="243"/>
    </location>
    <ligand>
        <name>K(+)</name>
        <dbReference type="ChEBI" id="CHEBI:29103"/>
        <label>2</label>
    </ligand>
</feature>
<feature type="binding site" evidence="1">
    <location>
        <position position="251"/>
    </location>
    <ligand>
        <name>NAD(+)</name>
        <dbReference type="ChEBI" id="CHEBI:57540"/>
    </ligand>
</feature>
<feature type="binding site" description="covalent" evidence="1">
    <location>
        <position position="283"/>
    </location>
    <ligand>
        <name>NAD(+)</name>
        <dbReference type="ChEBI" id="CHEBI:57540"/>
    </ligand>
</feature>
<feature type="binding site" evidence="1">
    <location>
        <position position="384"/>
    </location>
    <ligand>
        <name>NAD(+)</name>
        <dbReference type="ChEBI" id="CHEBI:57540"/>
    </ligand>
</feature>
<feature type="binding site" evidence="1">
    <location>
        <position position="454"/>
    </location>
    <ligand>
        <name>K(+)</name>
        <dbReference type="ChEBI" id="CHEBI:29103"/>
        <label>2</label>
    </ligand>
</feature>
<feature type="binding site" evidence="1">
    <location>
        <position position="457"/>
    </location>
    <ligand>
        <name>K(+)</name>
        <dbReference type="ChEBI" id="CHEBI:29103"/>
        <label>2</label>
    </ligand>
</feature>
<feature type="modified residue" description="Cysteine sulfenic acid (-SOH)" evidence="1">
    <location>
        <position position="283"/>
    </location>
</feature>
<comment type="function">
    <text evidence="1">Involved in the biosynthesis of the osmoprotectant glycine betaine. Catalyzes the irreversible oxidation of betaine aldehyde to the corresponding acid.</text>
</comment>
<comment type="catalytic activity">
    <reaction evidence="1">
        <text>betaine aldehyde + NAD(+) + H2O = glycine betaine + NADH + 2 H(+)</text>
        <dbReference type="Rhea" id="RHEA:15305"/>
        <dbReference type="ChEBI" id="CHEBI:15377"/>
        <dbReference type="ChEBI" id="CHEBI:15378"/>
        <dbReference type="ChEBI" id="CHEBI:15710"/>
        <dbReference type="ChEBI" id="CHEBI:17750"/>
        <dbReference type="ChEBI" id="CHEBI:57540"/>
        <dbReference type="ChEBI" id="CHEBI:57945"/>
        <dbReference type="EC" id="1.2.1.8"/>
    </reaction>
    <physiologicalReaction direction="left-to-right" evidence="1">
        <dbReference type="Rhea" id="RHEA:15306"/>
    </physiologicalReaction>
</comment>
<comment type="cofactor">
    <cofactor evidence="1">
        <name>K(+)</name>
        <dbReference type="ChEBI" id="CHEBI:29103"/>
    </cofactor>
    <text evidence="1">Binds 2 potassium ions per subunit.</text>
</comment>
<comment type="pathway">
    <text evidence="1">Amine and polyamine biosynthesis; betaine biosynthesis via choline pathway; betaine from betaine aldehyde: step 1/1.</text>
</comment>
<comment type="subunit">
    <text evidence="1">Dimer of dimers.</text>
</comment>
<comment type="similarity">
    <text evidence="1">Belongs to the aldehyde dehydrogenase family.</text>
</comment>
<sequence>MKAQPKASHFIGGAFVEDKAGKPLPVIYPATDEEIASLYSATPGIIEAAYAAALKAQGEWAALKPVERGRILRRTAEILREKNRKLSKLETLDTGKALQETLVADAASAADALEFFGGIISGFNGEFVELGGSFAYTRREALGICVGIGAWNYPIQIAAWKSAPALAMGNAFIFKPSENTPLSALALAEAYKEAGLPDGLFNVVQGYGDVGAALVNHRLTAKVSLTGSVPTGRRIMAQAGEQLKHVTMELGGKSPLIVFDDADLESAIGGAMLGNFYSTGQVCSNGTRVFVHKNIRERFIERLVERTRKIRIGDPFDEATQMGPLISAAQRDKVLSYIKKGKAEGATLACGGGVPKLQGFDKGFFIEPTVFADVTDTMTIAREEIFGPVMSVLEFSDEDEVIARANDSEFGLAAGVFTADLSRGHHVIGQIKAGTCWINAYNLTPVEVPFGGYKQSGIGRENGIAALAHYSQIKTVYVEMGKVDSPY</sequence>
<proteinExistence type="inferred from homology"/>
<dbReference type="EC" id="1.2.1.8" evidence="1"/>
<dbReference type="EMBL" id="AE014291">
    <property type="protein sequence ID" value="AAN29483.1"/>
    <property type="molecule type" value="Genomic_DNA"/>
</dbReference>
<dbReference type="EMBL" id="CP002997">
    <property type="protein sequence ID" value="AEM17900.1"/>
    <property type="molecule type" value="Genomic_DNA"/>
</dbReference>
<dbReference type="RefSeq" id="WP_004690653.1">
    <property type="nucleotide sequence ID" value="NZ_KN046804.1"/>
</dbReference>
<dbReference type="SMR" id="Q8G1Z9"/>
<dbReference type="GeneID" id="55590288"/>
<dbReference type="KEGG" id="bms:BR0552"/>
<dbReference type="KEGG" id="bsi:BS1330_I0548"/>
<dbReference type="PATRIC" id="fig|204722.21.peg.2833"/>
<dbReference type="HOGENOM" id="CLU_005391_0_1_5"/>
<dbReference type="PhylomeDB" id="Q8G1Z9"/>
<dbReference type="UniPathway" id="UPA00529">
    <property type="reaction ID" value="UER00386"/>
</dbReference>
<dbReference type="Proteomes" id="UP000007104">
    <property type="component" value="Chromosome I"/>
</dbReference>
<dbReference type="GO" id="GO:0008802">
    <property type="term" value="F:betaine-aldehyde dehydrogenase (NAD+) activity"/>
    <property type="evidence" value="ECO:0007669"/>
    <property type="project" value="UniProtKB-UniRule"/>
</dbReference>
<dbReference type="GO" id="GO:0046872">
    <property type="term" value="F:metal ion binding"/>
    <property type="evidence" value="ECO:0007669"/>
    <property type="project" value="UniProtKB-KW"/>
</dbReference>
<dbReference type="GO" id="GO:0019285">
    <property type="term" value="P:glycine betaine biosynthetic process from choline"/>
    <property type="evidence" value="ECO:0007669"/>
    <property type="project" value="UniProtKB-UniRule"/>
</dbReference>
<dbReference type="CDD" id="cd07090">
    <property type="entry name" value="ALDH_F9_TMBADH"/>
    <property type="match status" value="1"/>
</dbReference>
<dbReference type="FunFam" id="3.40.605.10:FF:000026">
    <property type="entry name" value="Aldehyde dehydrogenase, putative"/>
    <property type="match status" value="1"/>
</dbReference>
<dbReference type="FunFam" id="3.40.309.10:FF:000014">
    <property type="entry name" value="NAD/NADP-dependent betaine aldehyde dehydrogenase"/>
    <property type="match status" value="1"/>
</dbReference>
<dbReference type="FunFam" id="3.40.605.10:FF:000007">
    <property type="entry name" value="NAD/NADP-dependent betaine aldehyde dehydrogenase"/>
    <property type="match status" value="1"/>
</dbReference>
<dbReference type="Gene3D" id="3.40.605.10">
    <property type="entry name" value="Aldehyde Dehydrogenase, Chain A, domain 1"/>
    <property type="match status" value="1"/>
</dbReference>
<dbReference type="Gene3D" id="3.40.309.10">
    <property type="entry name" value="Aldehyde Dehydrogenase, Chain A, domain 2"/>
    <property type="match status" value="1"/>
</dbReference>
<dbReference type="HAMAP" id="MF_00804">
    <property type="entry name" value="BADH"/>
    <property type="match status" value="1"/>
</dbReference>
<dbReference type="InterPro" id="IPR016161">
    <property type="entry name" value="Ald_DH/histidinol_DH"/>
</dbReference>
<dbReference type="InterPro" id="IPR016163">
    <property type="entry name" value="Ald_DH_C"/>
</dbReference>
<dbReference type="InterPro" id="IPR016160">
    <property type="entry name" value="Ald_DH_CS_CYS"/>
</dbReference>
<dbReference type="InterPro" id="IPR029510">
    <property type="entry name" value="Ald_DH_CS_GLU"/>
</dbReference>
<dbReference type="InterPro" id="IPR016162">
    <property type="entry name" value="Ald_DH_N"/>
</dbReference>
<dbReference type="InterPro" id="IPR015590">
    <property type="entry name" value="Aldehyde_DH_dom"/>
</dbReference>
<dbReference type="InterPro" id="IPR011264">
    <property type="entry name" value="BADH"/>
</dbReference>
<dbReference type="NCBIfam" id="TIGR01804">
    <property type="entry name" value="BADH"/>
    <property type="match status" value="1"/>
</dbReference>
<dbReference type="NCBIfam" id="NF009725">
    <property type="entry name" value="PRK13252.1"/>
    <property type="match status" value="1"/>
</dbReference>
<dbReference type="PANTHER" id="PTHR11699">
    <property type="entry name" value="ALDEHYDE DEHYDROGENASE-RELATED"/>
    <property type="match status" value="1"/>
</dbReference>
<dbReference type="Pfam" id="PF00171">
    <property type="entry name" value="Aldedh"/>
    <property type="match status" value="1"/>
</dbReference>
<dbReference type="SUPFAM" id="SSF53720">
    <property type="entry name" value="ALDH-like"/>
    <property type="match status" value="1"/>
</dbReference>
<dbReference type="PROSITE" id="PS00070">
    <property type="entry name" value="ALDEHYDE_DEHYDR_CYS"/>
    <property type="match status" value="1"/>
</dbReference>
<dbReference type="PROSITE" id="PS00687">
    <property type="entry name" value="ALDEHYDE_DEHYDR_GLU"/>
    <property type="match status" value="1"/>
</dbReference>
<evidence type="ECO:0000255" key="1">
    <source>
        <dbReference type="HAMAP-Rule" id="MF_00804"/>
    </source>
</evidence>
<name>BETB_BRUSU</name>
<gene>
    <name evidence="1" type="primary">betB</name>
    <name type="ordered locus">BR0552</name>
    <name type="ordered locus">BS1330_I0548</name>
</gene>
<accession>Q8G1Z9</accession>
<accession>G0K7H2</accession>
<reference key="1">
    <citation type="journal article" date="2002" name="Proc. Natl. Acad. Sci. U.S.A.">
        <title>The Brucella suis genome reveals fundamental similarities between animal and plant pathogens and symbionts.</title>
        <authorList>
            <person name="Paulsen I.T."/>
            <person name="Seshadri R."/>
            <person name="Nelson K.E."/>
            <person name="Eisen J.A."/>
            <person name="Heidelberg J.F."/>
            <person name="Read T.D."/>
            <person name="Dodson R.J."/>
            <person name="Umayam L.A."/>
            <person name="Brinkac L.M."/>
            <person name="Beanan M.J."/>
            <person name="Daugherty S.C."/>
            <person name="DeBoy R.T."/>
            <person name="Durkin A.S."/>
            <person name="Kolonay J.F."/>
            <person name="Madupu R."/>
            <person name="Nelson W.C."/>
            <person name="Ayodeji B."/>
            <person name="Kraul M."/>
            <person name="Shetty J."/>
            <person name="Malek J.A."/>
            <person name="Van Aken S.E."/>
            <person name="Riedmuller S."/>
            <person name="Tettelin H."/>
            <person name="Gill S.R."/>
            <person name="White O."/>
            <person name="Salzberg S.L."/>
            <person name="Hoover D.L."/>
            <person name="Lindler L.E."/>
            <person name="Halling S.M."/>
            <person name="Boyle S.M."/>
            <person name="Fraser C.M."/>
        </authorList>
    </citation>
    <scope>NUCLEOTIDE SEQUENCE [LARGE SCALE GENOMIC DNA]</scope>
    <source>
        <strain>1330</strain>
    </source>
</reference>
<reference key="2">
    <citation type="journal article" date="2011" name="J. Bacteriol.">
        <title>Revised genome sequence of Brucella suis 1330.</title>
        <authorList>
            <person name="Tae H."/>
            <person name="Shallom S."/>
            <person name="Settlage R."/>
            <person name="Preston D."/>
            <person name="Adams L.G."/>
            <person name="Garner H.R."/>
        </authorList>
    </citation>
    <scope>NUCLEOTIDE SEQUENCE [LARGE SCALE GENOMIC DNA]</scope>
    <source>
        <strain>1330</strain>
    </source>
</reference>
<keyword id="KW-0479">Metal-binding</keyword>
<keyword id="KW-0520">NAD</keyword>
<keyword id="KW-0521">NADP</keyword>
<keyword id="KW-0558">Oxidation</keyword>
<keyword id="KW-0560">Oxidoreductase</keyword>
<keyword id="KW-0630">Potassium</keyword>
<organism>
    <name type="scientific">Brucella suis biovar 1 (strain 1330)</name>
    <dbReference type="NCBI Taxonomy" id="204722"/>
    <lineage>
        <taxon>Bacteria</taxon>
        <taxon>Pseudomonadati</taxon>
        <taxon>Pseudomonadota</taxon>
        <taxon>Alphaproteobacteria</taxon>
        <taxon>Hyphomicrobiales</taxon>
        <taxon>Brucellaceae</taxon>
        <taxon>Brucella/Ochrobactrum group</taxon>
        <taxon>Brucella</taxon>
    </lineage>
</organism>
<protein>
    <recommendedName>
        <fullName evidence="1">Betaine aldehyde dehydrogenase</fullName>
        <shortName evidence="1">BADH</shortName>
        <ecNumber evidence="1">1.2.1.8</ecNumber>
    </recommendedName>
</protein>